<sequence>MAGPDIEAVKSYLLDLQESICNALETEEPRARFVEDRWEHAAGGGGRTRVLSGGETFEQGGVNFSHVRGASLPASATAHRPELAGRGFQATGVSLVIHPLNPYVPTSHANVRFFLAEKEGETPIWWFGGGFDLTPFYPFEEDVIHWHRTARNACLPFGEDVYPRFKRWCDEYFFLNHRNETRGVGGLFFDDLNEWGFERSFAFLRSVGDHYLKAYLPIVQRRKAIPYGEREREFQLYRRGRYVEFNLVYDRGTLFGLQSGGRTESILMSLPPVAHWRYDWRPERGSAEENLYLNYLKPKEWLES</sequence>
<feature type="chain" id="PRO_0000109903" description="Oxygen-dependent coproporphyrinogen-III oxidase">
    <location>
        <begin position="1"/>
        <end position="304"/>
    </location>
</feature>
<feature type="region of interest" description="Important for dimerization" evidence="1">
    <location>
        <begin position="242"/>
        <end position="277"/>
    </location>
</feature>
<feature type="active site" description="Proton donor" evidence="1">
    <location>
        <position position="108"/>
    </location>
</feature>
<feature type="binding site" evidence="1">
    <location>
        <position position="94"/>
    </location>
    <ligand>
        <name>substrate</name>
    </ligand>
</feature>
<feature type="binding site" evidence="1">
    <location>
        <position position="98"/>
    </location>
    <ligand>
        <name>a divalent metal cation</name>
        <dbReference type="ChEBI" id="CHEBI:60240"/>
    </ligand>
</feature>
<feature type="binding site" evidence="1">
    <location>
        <position position="108"/>
    </location>
    <ligand>
        <name>a divalent metal cation</name>
        <dbReference type="ChEBI" id="CHEBI:60240"/>
    </ligand>
</feature>
<feature type="binding site" evidence="1">
    <location>
        <begin position="110"/>
        <end position="112"/>
    </location>
    <ligand>
        <name>substrate</name>
    </ligand>
</feature>
<feature type="binding site" evidence="1">
    <location>
        <position position="147"/>
    </location>
    <ligand>
        <name>a divalent metal cation</name>
        <dbReference type="ChEBI" id="CHEBI:60240"/>
    </ligand>
</feature>
<feature type="binding site" evidence="1">
    <location>
        <position position="177"/>
    </location>
    <ligand>
        <name>a divalent metal cation</name>
        <dbReference type="ChEBI" id="CHEBI:60240"/>
    </ligand>
</feature>
<feature type="binding site" evidence="1">
    <location>
        <begin position="260"/>
        <end position="262"/>
    </location>
    <ligand>
        <name>substrate</name>
    </ligand>
</feature>
<feature type="site" description="Important for dimerization" evidence="1">
    <location>
        <position position="177"/>
    </location>
</feature>
<organism>
    <name type="scientific">Methylococcus capsulatus (strain ATCC 33009 / NCIMB 11132 / Bath)</name>
    <dbReference type="NCBI Taxonomy" id="243233"/>
    <lineage>
        <taxon>Bacteria</taxon>
        <taxon>Pseudomonadati</taxon>
        <taxon>Pseudomonadota</taxon>
        <taxon>Gammaproteobacteria</taxon>
        <taxon>Methylococcales</taxon>
        <taxon>Methylococcaceae</taxon>
        <taxon>Methylococcus</taxon>
    </lineage>
</organism>
<evidence type="ECO:0000255" key="1">
    <source>
        <dbReference type="HAMAP-Rule" id="MF_00333"/>
    </source>
</evidence>
<gene>
    <name evidence="1" type="primary">hemF</name>
    <name type="ordered locus">MCA2791</name>
</gene>
<protein>
    <recommendedName>
        <fullName evidence="1">Oxygen-dependent coproporphyrinogen-III oxidase</fullName>
        <shortName evidence="1">CPO</shortName>
        <shortName evidence="1">Coprogen oxidase</shortName>
        <shortName evidence="1">Coproporphyrinogenase</shortName>
        <ecNumber evidence="1">1.3.3.3</ecNumber>
    </recommendedName>
</protein>
<reference key="1">
    <citation type="journal article" date="2004" name="PLoS Biol.">
        <title>Genomic insights into methanotrophy: the complete genome sequence of Methylococcus capsulatus (Bath).</title>
        <authorList>
            <person name="Ward N.L."/>
            <person name="Larsen O."/>
            <person name="Sakwa J."/>
            <person name="Bruseth L."/>
            <person name="Khouri H.M."/>
            <person name="Durkin A.S."/>
            <person name="Dimitrov G."/>
            <person name="Jiang L."/>
            <person name="Scanlan D."/>
            <person name="Kang K.H."/>
            <person name="Lewis M.R."/>
            <person name="Nelson K.E."/>
            <person name="Methe B.A."/>
            <person name="Wu M."/>
            <person name="Heidelberg J.F."/>
            <person name="Paulsen I.T."/>
            <person name="Fouts D.E."/>
            <person name="Ravel J."/>
            <person name="Tettelin H."/>
            <person name="Ren Q."/>
            <person name="Read T.D."/>
            <person name="DeBoy R.T."/>
            <person name="Seshadri R."/>
            <person name="Salzberg S.L."/>
            <person name="Jensen H.B."/>
            <person name="Birkeland N.K."/>
            <person name="Nelson W.C."/>
            <person name="Dodson R.J."/>
            <person name="Grindhaug S.H."/>
            <person name="Holt I.E."/>
            <person name="Eidhammer I."/>
            <person name="Jonasen I."/>
            <person name="Vanaken S."/>
            <person name="Utterback T.R."/>
            <person name="Feldblyum T.V."/>
            <person name="Fraser C.M."/>
            <person name="Lillehaug J.R."/>
            <person name="Eisen J.A."/>
        </authorList>
    </citation>
    <scope>NUCLEOTIDE SEQUENCE [LARGE SCALE GENOMIC DNA]</scope>
    <source>
        <strain>ATCC 33009 / NCIMB 11132 / Bath</strain>
    </source>
</reference>
<comment type="function">
    <text evidence="1">Involved in the heme biosynthesis. Catalyzes the aerobic oxidative decarboxylation of propionate groups of rings A and B of coproporphyrinogen-III to yield the vinyl groups in protoporphyrinogen-IX.</text>
</comment>
<comment type="catalytic activity">
    <reaction evidence="1">
        <text>coproporphyrinogen III + O2 + 2 H(+) = protoporphyrinogen IX + 2 CO2 + 2 H2O</text>
        <dbReference type="Rhea" id="RHEA:18257"/>
        <dbReference type="ChEBI" id="CHEBI:15377"/>
        <dbReference type="ChEBI" id="CHEBI:15378"/>
        <dbReference type="ChEBI" id="CHEBI:15379"/>
        <dbReference type="ChEBI" id="CHEBI:16526"/>
        <dbReference type="ChEBI" id="CHEBI:57307"/>
        <dbReference type="ChEBI" id="CHEBI:57309"/>
        <dbReference type="EC" id="1.3.3.3"/>
    </reaction>
</comment>
<comment type="cofactor">
    <cofactor evidence="1">
        <name>a divalent metal cation</name>
        <dbReference type="ChEBI" id="CHEBI:60240"/>
    </cofactor>
</comment>
<comment type="pathway">
    <text evidence="1">Porphyrin-containing compound metabolism; protoporphyrin-IX biosynthesis; protoporphyrinogen-IX from coproporphyrinogen-III (O2 route): step 1/1.</text>
</comment>
<comment type="subunit">
    <text evidence="1">Homodimer.</text>
</comment>
<comment type="subcellular location">
    <subcellularLocation>
        <location evidence="1">Cytoplasm</location>
    </subcellularLocation>
</comment>
<comment type="similarity">
    <text evidence="1">Belongs to the aerobic coproporphyrinogen-III oxidase family.</text>
</comment>
<keyword id="KW-0963">Cytoplasm</keyword>
<keyword id="KW-0350">Heme biosynthesis</keyword>
<keyword id="KW-0479">Metal-binding</keyword>
<keyword id="KW-0560">Oxidoreductase</keyword>
<keyword id="KW-0627">Porphyrin biosynthesis</keyword>
<keyword id="KW-1185">Reference proteome</keyword>
<name>HEM6_METCA</name>
<accession>Q603L4</accession>
<dbReference type="EC" id="1.3.3.3" evidence="1"/>
<dbReference type="EMBL" id="AE017282">
    <property type="protein sequence ID" value="AAU91097.1"/>
    <property type="molecule type" value="Genomic_DNA"/>
</dbReference>
<dbReference type="RefSeq" id="WP_010961992.1">
    <property type="nucleotide sequence ID" value="NC_002977.6"/>
</dbReference>
<dbReference type="SMR" id="Q603L4"/>
<dbReference type="STRING" id="243233.MCA2791"/>
<dbReference type="GeneID" id="88224967"/>
<dbReference type="KEGG" id="mca:MCA2791"/>
<dbReference type="eggNOG" id="COG0408">
    <property type="taxonomic scope" value="Bacteria"/>
</dbReference>
<dbReference type="HOGENOM" id="CLU_026169_0_1_6"/>
<dbReference type="UniPathway" id="UPA00251">
    <property type="reaction ID" value="UER00322"/>
</dbReference>
<dbReference type="Proteomes" id="UP000006821">
    <property type="component" value="Chromosome"/>
</dbReference>
<dbReference type="GO" id="GO:0005737">
    <property type="term" value="C:cytoplasm"/>
    <property type="evidence" value="ECO:0007669"/>
    <property type="project" value="UniProtKB-SubCell"/>
</dbReference>
<dbReference type="GO" id="GO:0004109">
    <property type="term" value="F:coproporphyrinogen oxidase activity"/>
    <property type="evidence" value="ECO:0007669"/>
    <property type="project" value="UniProtKB-UniRule"/>
</dbReference>
<dbReference type="GO" id="GO:0046872">
    <property type="term" value="F:metal ion binding"/>
    <property type="evidence" value="ECO:0007669"/>
    <property type="project" value="UniProtKB-KW"/>
</dbReference>
<dbReference type="GO" id="GO:0042803">
    <property type="term" value="F:protein homodimerization activity"/>
    <property type="evidence" value="ECO:0000250"/>
    <property type="project" value="UniProtKB"/>
</dbReference>
<dbReference type="GO" id="GO:0006782">
    <property type="term" value="P:protoporphyrinogen IX biosynthetic process"/>
    <property type="evidence" value="ECO:0007669"/>
    <property type="project" value="UniProtKB-UniRule"/>
</dbReference>
<dbReference type="FunFam" id="3.40.1500.10:FF:000001">
    <property type="entry name" value="Oxygen-dependent coproporphyrinogen-III oxidase"/>
    <property type="match status" value="1"/>
</dbReference>
<dbReference type="Gene3D" id="3.40.1500.10">
    <property type="entry name" value="Coproporphyrinogen III oxidase, aerobic"/>
    <property type="match status" value="1"/>
</dbReference>
<dbReference type="HAMAP" id="MF_00333">
    <property type="entry name" value="Coprogen_oxidas"/>
    <property type="match status" value="1"/>
</dbReference>
<dbReference type="InterPro" id="IPR001260">
    <property type="entry name" value="Coprogen_oxidase_aer"/>
</dbReference>
<dbReference type="InterPro" id="IPR036406">
    <property type="entry name" value="Coprogen_oxidase_aer_sf"/>
</dbReference>
<dbReference type="InterPro" id="IPR018375">
    <property type="entry name" value="Coprogen_oxidase_CS"/>
</dbReference>
<dbReference type="NCBIfam" id="NF003727">
    <property type="entry name" value="PRK05330.1"/>
    <property type="match status" value="1"/>
</dbReference>
<dbReference type="PANTHER" id="PTHR10755">
    <property type="entry name" value="COPROPORPHYRINOGEN III OXIDASE, MITOCHONDRIAL"/>
    <property type="match status" value="1"/>
</dbReference>
<dbReference type="PANTHER" id="PTHR10755:SF0">
    <property type="entry name" value="OXYGEN-DEPENDENT COPROPORPHYRINOGEN-III OXIDASE, MITOCHONDRIAL"/>
    <property type="match status" value="1"/>
</dbReference>
<dbReference type="Pfam" id="PF01218">
    <property type="entry name" value="Coprogen_oxidas"/>
    <property type="match status" value="1"/>
</dbReference>
<dbReference type="PIRSF" id="PIRSF000166">
    <property type="entry name" value="Coproporphyri_ox"/>
    <property type="match status" value="1"/>
</dbReference>
<dbReference type="PRINTS" id="PR00073">
    <property type="entry name" value="COPRGNOXDASE"/>
</dbReference>
<dbReference type="SUPFAM" id="SSF102886">
    <property type="entry name" value="Coproporphyrinogen III oxidase"/>
    <property type="match status" value="1"/>
</dbReference>
<dbReference type="PROSITE" id="PS01021">
    <property type="entry name" value="COPROGEN_OXIDASE"/>
    <property type="match status" value="1"/>
</dbReference>
<proteinExistence type="inferred from homology"/>